<reference key="1">
    <citation type="submission" date="2007-03" db="EMBL/GenBank/DDBJ databases">
        <title>Complete sequence of Desulfotomaculum reducens MI-1.</title>
        <authorList>
            <consortium name="US DOE Joint Genome Institute"/>
            <person name="Copeland A."/>
            <person name="Lucas S."/>
            <person name="Lapidus A."/>
            <person name="Barry K."/>
            <person name="Detter J.C."/>
            <person name="Glavina del Rio T."/>
            <person name="Hammon N."/>
            <person name="Israni S."/>
            <person name="Dalin E."/>
            <person name="Tice H."/>
            <person name="Pitluck S."/>
            <person name="Sims D."/>
            <person name="Brettin T."/>
            <person name="Bruce D."/>
            <person name="Han C."/>
            <person name="Tapia R."/>
            <person name="Schmutz J."/>
            <person name="Larimer F."/>
            <person name="Land M."/>
            <person name="Hauser L."/>
            <person name="Kyrpides N."/>
            <person name="Kim E."/>
            <person name="Tebo B.M."/>
            <person name="Richardson P."/>
        </authorList>
    </citation>
    <scope>NUCLEOTIDE SEQUENCE [LARGE SCALE GENOMIC DNA]</scope>
    <source>
        <strain>ATCC BAA-1160 / DSM 100696 / MI-1</strain>
    </source>
</reference>
<sequence length="166" mass="17748">MELAKGNAEIQVGIADYKVAASPNRLITLGLGSCVGVVLYDPVKKVGGLLHIMLPDSTQFNNVTKPAKFADTGIPLMIDEIKRLGGIPSRLTAKLAGGAQMFSGLDEKFVLNIGQRNSKMVKEILSRMGIRILAEELGGNRGRTMIFDIASGQVTIRTIGSPLKVI</sequence>
<dbReference type="EC" id="3.5.1.44" evidence="1"/>
<dbReference type="EMBL" id="CP000612">
    <property type="protein sequence ID" value="ABO50895.1"/>
    <property type="molecule type" value="Genomic_DNA"/>
</dbReference>
<dbReference type="RefSeq" id="WP_011878693.1">
    <property type="nucleotide sequence ID" value="NC_009253.1"/>
</dbReference>
<dbReference type="SMR" id="A4J742"/>
<dbReference type="STRING" id="349161.Dred_2385"/>
<dbReference type="KEGG" id="drm:Dred_2385"/>
<dbReference type="eggNOG" id="COG1871">
    <property type="taxonomic scope" value="Bacteria"/>
</dbReference>
<dbReference type="HOGENOM" id="CLU_087854_2_0_9"/>
<dbReference type="OrthoDB" id="9807202at2"/>
<dbReference type="Proteomes" id="UP000001556">
    <property type="component" value="Chromosome"/>
</dbReference>
<dbReference type="GO" id="GO:0050568">
    <property type="term" value="F:protein-glutamine glutaminase activity"/>
    <property type="evidence" value="ECO:0007669"/>
    <property type="project" value="UniProtKB-UniRule"/>
</dbReference>
<dbReference type="GO" id="GO:0006935">
    <property type="term" value="P:chemotaxis"/>
    <property type="evidence" value="ECO:0007669"/>
    <property type="project" value="UniProtKB-UniRule"/>
</dbReference>
<dbReference type="CDD" id="cd16352">
    <property type="entry name" value="CheD"/>
    <property type="match status" value="1"/>
</dbReference>
<dbReference type="Gene3D" id="3.30.1330.200">
    <property type="match status" value="1"/>
</dbReference>
<dbReference type="HAMAP" id="MF_01440">
    <property type="entry name" value="CheD"/>
    <property type="match status" value="1"/>
</dbReference>
<dbReference type="InterPro" id="IPR038592">
    <property type="entry name" value="CheD-like_sf"/>
</dbReference>
<dbReference type="InterPro" id="IPR005659">
    <property type="entry name" value="Chemorcpt_Glu_NH3ase_CheD"/>
</dbReference>
<dbReference type="InterPro" id="IPR011324">
    <property type="entry name" value="Cytotoxic_necrot_fac-like_cat"/>
</dbReference>
<dbReference type="PANTHER" id="PTHR35147">
    <property type="entry name" value="CHEMORECEPTOR GLUTAMINE DEAMIDASE CHED-RELATED"/>
    <property type="match status" value="1"/>
</dbReference>
<dbReference type="PANTHER" id="PTHR35147:SF1">
    <property type="entry name" value="CHEMORECEPTOR GLUTAMINE DEAMIDASE CHED-RELATED"/>
    <property type="match status" value="1"/>
</dbReference>
<dbReference type="Pfam" id="PF03975">
    <property type="entry name" value="CheD"/>
    <property type="match status" value="1"/>
</dbReference>
<dbReference type="SUPFAM" id="SSF64438">
    <property type="entry name" value="CNF1/YfiH-like putative cysteine hydrolases"/>
    <property type="match status" value="1"/>
</dbReference>
<proteinExistence type="inferred from homology"/>
<protein>
    <recommendedName>
        <fullName evidence="1">Probable chemoreceptor glutamine deamidase CheD</fullName>
        <ecNumber evidence="1">3.5.1.44</ecNumber>
    </recommendedName>
</protein>
<accession>A4J742</accession>
<feature type="chain" id="PRO_1000073517" description="Probable chemoreceptor glutamine deamidase CheD">
    <location>
        <begin position="1"/>
        <end position="166"/>
    </location>
</feature>
<evidence type="ECO:0000255" key="1">
    <source>
        <dbReference type="HAMAP-Rule" id="MF_01440"/>
    </source>
</evidence>
<organism>
    <name type="scientific">Desulforamulus reducens (strain ATCC BAA-1160 / DSM 100696 / MI-1)</name>
    <name type="common">Desulfotomaculum reducens</name>
    <dbReference type="NCBI Taxonomy" id="349161"/>
    <lineage>
        <taxon>Bacteria</taxon>
        <taxon>Bacillati</taxon>
        <taxon>Bacillota</taxon>
        <taxon>Clostridia</taxon>
        <taxon>Eubacteriales</taxon>
        <taxon>Peptococcaceae</taxon>
        <taxon>Desulforamulus</taxon>
    </lineage>
</organism>
<comment type="function">
    <text evidence="1">Probably deamidates glutamine residues to glutamate on methyl-accepting chemotaxis receptors (MCPs), playing an important role in chemotaxis.</text>
</comment>
<comment type="catalytic activity">
    <reaction evidence="1">
        <text>L-glutaminyl-[protein] + H2O = L-glutamyl-[protein] + NH4(+)</text>
        <dbReference type="Rhea" id="RHEA:16441"/>
        <dbReference type="Rhea" id="RHEA-COMP:10207"/>
        <dbReference type="Rhea" id="RHEA-COMP:10208"/>
        <dbReference type="ChEBI" id="CHEBI:15377"/>
        <dbReference type="ChEBI" id="CHEBI:28938"/>
        <dbReference type="ChEBI" id="CHEBI:29973"/>
        <dbReference type="ChEBI" id="CHEBI:30011"/>
        <dbReference type="EC" id="3.5.1.44"/>
    </reaction>
</comment>
<comment type="similarity">
    <text evidence="1">Belongs to the CheD family.</text>
</comment>
<name>CHED_DESRM</name>
<gene>
    <name evidence="1" type="primary">cheD</name>
    <name type="ordered locus">Dred_2385</name>
</gene>
<keyword id="KW-0145">Chemotaxis</keyword>
<keyword id="KW-0378">Hydrolase</keyword>
<keyword id="KW-1185">Reference proteome</keyword>